<feature type="chain" id="PRO_0000134578" description="Orotidine 5'-phosphate decarboxylase">
    <location>
        <begin position="1"/>
        <end position="230"/>
    </location>
</feature>
<feature type="active site" description="Proton donor" evidence="1">
    <location>
        <position position="60"/>
    </location>
</feature>
<feature type="binding site" evidence="1">
    <location>
        <position position="10"/>
    </location>
    <ligand>
        <name>substrate</name>
    </ligand>
</feature>
<feature type="binding site" evidence="1">
    <location>
        <position position="31"/>
    </location>
    <ligand>
        <name>substrate</name>
    </ligand>
</feature>
<feature type="binding site" evidence="1">
    <location>
        <begin position="58"/>
        <end position="67"/>
    </location>
    <ligand>
        <name>substrate</name>
    </ligand>
</feature>
<feature type="binding site" evidence="1">
    <location>
        <position position="117"/>
    </location>
    <ligand>
        <name>substrate</name>
    </ligand>
</feature>
<feature type="binding site" evidence="1">
    <location>
        <position position="179"/>
    </location>
    <ligand>
        <name>substrate</name>
    </ligand>
</feature>
<feature type="binding site" evidence="1">
    <location>
        <position position="188"/>
    </location>
    <ligand>
        <name>substrate</name>
    </ligand>
</feature>
<feature type="binding site" evidence="1">
    <location>
        <position position="208"/>
    </location>
    <ligand>
        <name>substrate</name>
    </ligand>
</feature>
<feature type="binding site" evidence="1">
    <location>
        <position position="209"/>
    </location>
    <ligand>
        <name>substrate</name>
    </ligand>
</feature>
<sequence>MKDLPIIALDFESKEKVNQFLDLFDESLFVKVGMELFYQEGPQLINEIKERGHDVFLDLKLHDIPNTVGKAMEGLAKLNVDLVNVHAAGGVKMMSEAIKGLRKHNQHTKIIAVTQLTSTTEDMLRHEQNIQTSIEEAVLNYAKLANAAGLDGVVCSPLESRMLTEKLGTSFLKVTPGIRPKGASQDDQHRITTPEEARQLGSTHIVVGRPITQSDNPVESYHKIKESWLV</sequence>
<protein>
    <recommendedName>
        <fullName evidence="1">Orotidine 5'-phosphate decarboxylase</fullName>
        <ecNumber evidence="1">4.1.1.23</ecNumber>
    </recommendedName>
    <alternativeName>
        <fullName evidence="1">OMP decarboxylase</fullName>
        <shortName evidence="1">OMPDCase</shortName>
        <shortName evidence="1">OMPdecase</shortName>
    </alternativeName>
</protein>
<organism>
    <name type="scientific">Staphylococcus aureus (strain MSSA476)</name>
    <dbReference type="NCBI Taxonomy" id="282459"/>
    <lineage>
        <taxon>Bacteria</taxon>
        <taxon>Bacillati</taxon>
        <taxon>Bacillota</taxon>
        <taxon>Bacilli</taxon>
        <taxon>Bacillales</taxon>
        <taxon>Staphylococcaceae</taxon>
        <taxon>Staphylococcus</taxon>
    </lineage>
</organism>
<proteinExistence type="inferred from homology"/>
<keyword id="KW-0210">Decarboxylase</keyword>
<keyword id="KW-0456">Lyase</keyword>
<keyword id="KW-0665">Pyrimidine biosynthesis</keyword>
<evidence type="ECO:0000255" key="1">
    <source>
        <dbReference type="HAMAP-Rule" id="MF_01200"/>
    </source>
</evidence>
<evidence type="ECO:0000305" key="2"/>
<name>PYRF_STAAS</name>
<dbReference type="EC" id="4.1.1.23" evidence="1"/>
<dbReference type="EMBL" id="BX571857">
    <property type="protein sequence ID" value="CAG42915.1"/>
    <property type="status" value="ALT_INIT"/>
    <property type="molecule type" value="Genomic_DNA"/>
</dbReference>
<dbReference type="RefSeq" id="WP_000654067.1">
    <property type="nucleotide sequence ID" value="NC_002953.3"/>
</dbReference>
<dbReference type="SMR" id="Q6GA09"/>
<dbReference type="KEGG" id="sas:SAS1138"/>
<dbReference type="HOGENOM" id="CLU_067069_1_1_9"/>
<dbReference type="UniPathway" id="UPA00070">
    <property type="reaction ID" value="UER00120"/>
</dbReference>
<dbReference type="GO" id="GO:0005829">
    <property type="term" value="C:cytosol"/>
    <property type="evidence" value="ECO:0007669"/>
    <property type="project" value="TreeGrafter"/>
</dbReference>
<dbReference type="GO" id="GO:0004590">
    <property type="term" value="F:orotidine-5'-phosphate decarboxylase activity"/>
    <property type="evidence" value="ECO:0007669"/>
    <property type="project" value="UniProtKB-UniRule"/>
</dbReference>
<dbReference type="GO" id="GO:0006207">
    <property type="term" value="P:'de novo' pyrimidine nucleobase biosynthetic process"/>
    <property type="evidence" value="ECO:0007669"/>
    <property type="project" value="InterPro"/>
</dbReference>
<dbReference type="GO" id="GO:0044205">
    <property type="term" value="P:'de novo' UMP biosynthetic process"/>
    <property type="evidence" value="ECO:0007669"/>
    <property type="project" value="UniProtKB-UniRule"/>
</dbReference>
<dbReference type="CDD" id="cd04725">
    <property type="entry name" value="OMP_decarboxylase_like"/>
    <property type="match status" value="1"/>
</dbReference>
<dbReference type="FunFam" id="3.20.20.70:FF:000015">
    <property type="entry name" value="Orotidine 5'-phosphate decarboxylase"/>
    <property type="match status" value="1"/>
</dbReference>
<dbReference type="Gene3D" id="3.20.20.70">
    <property type="entry name" value="Aldolase class I"/>
    <property type="match status" value="1"/>
</dbReference>
<dbReference type="HAMAP" id="MF_01200_B">
    <property type="entry name" value="OMPdecase_type1_B"/>
    <property type="match status" value="1"/>
</dbReference>
<dbReference type="InterPro" id="IPR013785">
    <property type="entry name" value="Aldolase_TIM"/>
</dbReference>
<dbReference type="InterPro" id="IPR014732">
    <property type="entry name" value="OMPdecase"/>
</dbReference>
<dbReference type="InterPro" id="IPR018089">
    <property type="entry name" value="OMPdecase_AS"/>
</dbReference>
<dbReference type="InterPro" id="IPR047596">
    <property type="entry name" value="OMPdecase_bac"/>
</dbReference>
<dbReference type="InterPro" id="IPR001754">
    <property type="entry name" value="OMPdeCOase_dom"/>
</dbReference>
<dbReference type="InterPro" id="IPR011060">
    <property type="entry name" value="RibuloseP-bd_barrel"/>
</dbReference>
<dbReference type="NCBIfam" id="NF001273">
    <property type="entry name" value="PRK00230.1"/>
    <property type="match status" value="1"/>
</dbReference>
<dbReference type="NCBIfam" id="TIGR01740">
    <property type="entry name" value="pyrF"/>
    <property type="match status" value="1"/>
</dbReference>
<dbReference type="PANTHER" id="PTHR32119">
    <property type="entry name" value="OROTIDINE 5'-PHOSPHATE DECARBOXYLASE"/>
    <property type="match status" value="1"/>
</dbReference>
<dbReference type="PANTHER" id="PTHR32119:SF2">
    <property type="entry name" value="OROTIDINE 5'-PHOSPHATE DECARBOXYLASE"/>
    <property type="match status" value="1"/>
</dbReference>
<dbReference type="Pfam" id="PF00215">
    <property type="entry name" value="OMPdecase"/>
    <property type="match status" value="1"/>
</dbReference>
<dbReference type="SMART" id="SM00934">
    <property type="entry name" value="OMPdecase"/>
    <property type="match status" value="1"/>
</dbReference>
<dbReference type="SUPFAM" id="SSF51366">
    <property type="entry name" value="Ribulose-phoshate binding barrel"/>
    <property type="match status" value="1"/>
</dbReference>
<dbReference type="PROSITE" id="PS00156">
    <property type="entry name" value="OMPDECASE"/>
    <property type="match status" value="1"/>
</dbReference>
<reference key="1">
    <citation type="journal article" date="2004" name="Proc. Natl. Acad. Sci. U.S.A.">
        <title>Complete genomes of two clinical Staphylococcus aureus strains: evidence for the rapid evolution of virulence and drug resistance.</title>
        <authorList>
            <person name="Holden M.T.G."/>
            <person name="Feil E.J."/>
            <person name="Lindsay J.A."/>
            <person name="Peacock S.J."/>
            <person name="Day N.P.J."/>
            <person name="Enright M.C."/>
            <person name="Foster T.J."/>
            <person name="Moore C.E."/>
            <person name="Hurst L."/>
            <person name="Atkin R."/>
            <person name="Barron A."/>
            <person name="Bason N."/>
            <person name="Bentley S.D."/>
            <person name="Chillingworth C."/>
            <person name="Chillingworth T."/>
            <person name="Churcher C."/>
            <person name="Clark L."/>
            <person name="Corton C."/>
            <person name="Cronin A."/>
            <person name="Doggett J."/>
            <person name="Dowd L."/>
            <person name="Feltwell T."/>
            <person name="Hance Z."/>
            <person name="Harris B."/>
            <person name="Hauser H."/>
            <person name="Holroyd S."/>
            <person name="Jagels K."/>
            <person name="James K.D."/>
            <person name="Lennard N."/>
            <person name="Line A."/>
            <person name="Mayes R."/>
            <person name="Moule S."/>
            <person name="Mungall K."/>
            <person name="Ormond D."/>
            <person name="Quail M.A."/>
            <person name="Rabbinowitsch E."/>
            <person name="Rutherford K.M."/>
            <person name="Sanders M."/>
            <person name="Sharp S."/>
            <person name="Simmonds M."/>
            <person name="Stevens K."/>
            <person name="Whitehead S."/>
            <person name="Barrell B.G."/>
            <person name="Spratt B.G."/>
            <person name="Parkhill J."/>
        </authorList>
    </citation>
    <scope>NUCLEOTIDE SEQUENCE [LARGE SCALE GENOMIC DNA]</scope>
    <source>
        <strain>MSSA476</strain>
    </source>
</reference>
<comment type="function">
    <text evidence="1">Catalyzes the decarboxylation of orotidine 5'-monophosphate (OMP) to uridine 5'-monophosphate (UMP).</text>
</comment>
<comment type="catalytic activity">
    <reaction evidence="1">
        <text>orotidine 5'-phosphate + H(+) = UMP + CO2</text>
        <dbReference type="Rhea" id="RHEA:11596"/>
        <dbReference type="ChEBI" id="CHEBI:15378"/>
        <dbReference type="ChEBI" id="CHEBI:16526"/>
        <dbReference type="ChEBI" id="CHEBI:57538"/>
        <dbReference type="ChEBI" id="CHEBI:57865"/>
        <dbReference type="EC" id="4.1.1.23"/>
    </reaction>
</comment>
<comment type="pathway">
    <text evidence="1">Pyrimidine metabolism; UMP biosynthesis via de novo pathway; UMP from orotate: step 2/2.</text>
</comment>
<comment type="subunit">
    <text evidence="1">Homodimer.</text>
</comment>
<comment type="similarity">
    <text evidence="1">Belongs to the OMP decarboxylase family. Type 1 subfamily.</text>
</comment>
<comment type="sequence caution" evidence="2">
    <conflict type="erroneous initiation">
        <sequence resource="EMBL-CDS" id="CAG42915"/>
    </conflict>
</comment>
<gene>
    <name evidence="1" type="primary">pyrF</name>
    <name type="ordered locus">SAS1138</name>
</gene>
<accession>Q6GA09</accession>